<reference key="1">
    <citation type="journal article" date="1994" name="J. Biochem.">
        <title>Cloning and sequence of the SCS3 gene which is required for inositol prototrophy in Saccharomyces cerevisiae.</title>
        <authorList>
            <person name="Hosaka K."/>
            <person name="Nikawa J."/>
            <person name="Kodaki T."/>
            <person name="Ishizu H."/>
            <person name="Yamashita S."/>
        </authorList>
    </citation>
    <scope>NUCLEOTIDE SEQUENCE [GENOMIC DNA]</scope>
    <scope>FUNCTION</scope>
    <source>
        <strain>SP-1</strain>
    </source>
</reference>
<reference key="2">
    <citation type="journal article" date="1996" name="Yeast">
        <title>Identification of a putative methylenetetrahydrofolate reductase by sequence analysis of a 6.8 kb DNA fragment of yeast chromosome VII.</title>
        <authorList>
            <person name="Tizon B."/>
            <person name="Rodriguez-Torres A.M."/>
            <person name="Rodriguez-Belmonte E."/>
            <person name="Cadahia J.L."/>
            <person name="Cerdan E."/>
        </authorList>
    </citation>
    <scope>NUCLEOTIDE SEQUENCE [GENOMIC DNA]</scope>
</reference>
<reference key="3">
    <citation type="journal article" date="1997" name="Nature">
        <title>The nucleotide sequence of Saccharomyces cerevisiae chromosome VII.</title>
        <authorList>
            <person name="Tettelin H."/>
            <person name="Agostoni-Carbone M.L."/>
            <person name="Albermann K."/>
            <person name="Albers M."/>
            <person name="Arroyo J."/>
            <person name="Backes U."/>
            <person name="Barreiros T."/>
            <person name="Bertani I."/>
            <person name="Bjourson A.J."/>
            <person name="Brueckner M."/>
            <person name="Bruschi C.V."/>
            <person name="Carignani G."/>
            <person name="Castagnoli L."/>
            <person name="Cerdan E."/>
            <person name="Clemente M.L."/>
            <person name="Coblenz A."/>
            <person name="Coglievina M."/>
            <person name="Coissac E."/>
            <person name="Defoor E."/>
            <person name="Del Bino S."/>
            <person name="Delius H."/>
            <person name="Delneri D."/>
            <person name="de Wergifosse P."/>
            <person name="Dujon B."/>
            <person name="Durand P."/>
            <person name="Entian K.-D."/>
            <person name="Eraso P."/>
            <person name="Escribano V."/>
            <person name="Fabiani L."/>
            <person name="Fartmann B."/>
            <person name="Feroli F."/>
            <person name="Feuermann M."/>
            <person name="Frontali L."/>
            <person name="Garcia-Gonzalez M."/>
            <person name="Garcia-Saez M.I."/>
            <person name="Goffeau A."/>
            <person name="Guerreiro P."/>
            <person name="Hani J."/>
            <person name="Hansen M."/>
            <person name="Hebling U."/>
            <person name="Hernandez K."/>
            <person name="Heumann K."/>
            <person name="Hilger F."/>
            <person name="Hofmann B."/>
            <person name="Indge K.J."/>
            <person name="James C.M."/>
            <person name="Klima R."/>
            <person name="Koetter P."/>
            <person name="Kramer B."/>
            <person name="Kramer W."/>
            <person name="Lauquin G."/>
            <person name="Leuther H."/>
            <person name="Louis E.J."/>
            <person name="Maillier E."/>
            <person name="Marconi A."/>
            <person name="Martegani E."/>
            <person name="Mazon M.J."/>
            <person name="Mazzoni C."/>
            <person name="McReynolds A.D.K."/>
            <person name="Melchioretto P."/>
            <person name="Mewes H.-W."/>
            <person name="Minenkova O."/>
            <person name="Mueller-Auer S."/>
            <person name="Nawrocki A."/>
            <person name="Netter P."/>
            <person name="Neu R."/>
            <person name="Nombela C."/>
            <person name="Oliver S.G."/>
            <person name="Panzeri L."/>
            <person name="Paoluzi S."/>
            <person name="Plevani P."/>
            <person name="Portetelle D."/>
            <person name="Portillo F."/>
            <person name="Potier S."/>
            <person name="Purnelle B."/>
            <person name="Rieger M."/>
            <person name="Riles L."/>
            <person name="Rinaldi T."/>
            <person name="Robben J."/>
            <person name="Rodrigues-Pousada C."/>
            <person name="Rodriguez-Belmonte E."/>
            <person name="Rodriguez-Torres A.M."/>
            <person name="Rose M."/>
            <person name="Ruzzi M."/>
            <person name="Saliola M."/>
            <person name="Sanchez-Perez M."/>
            <person name="Schaefer B."/>
            <person name="Schaefer M."/>
            <person name="Scharfe M."/>
            <person name="Schmidheini T."/>
            <person name="Schreer A."/>
            <person name="Skala J."/>
            <person name="Souciet J.-L."/>
            <person name="Steensma H.Y."/>
            <person name="Talla E."/>
            <person name="Thierry A."/>
            <person name="Vandenbol M."/>
            <person name="van der Aart Q.J.M."/>
            <person name="Van Dyck L."/>
            <person name="Vanoni M."/>
            <person name="Verhasselt P."/>
            <person name="Voet M."/>
            <person name="Volckaert G."/>
            <person name="Wambutt R."/>
            <person name="Watson M.D."/>
            <person name="Weber N."/>
            <person name="Wedler E."/>
            <person name="Wedler H."/>
            <person name="Wipfli P."/>
            <person name="Wolf K."/>
            <person name="Wright L.F."/>
            <person name="Zaccaria P."/>
            <person name="Zimmermann M."/>
            <person name="Zollner A."/>
            <person name="Kleine K."/>
        </authorList>
    </citation>
    <scope>NUCLEOTIDE SEQUENCE [LARGE SCALE GENOMIC DNA]</scope>
    <source>
        <strain>ATCC 204508 / S288c</strain>
    </source>
</reference>
<reference key="4">
    <citation type="journal article" date="2014" name="G3 (Bethesda)">
        <title>The reference genome sequence of Saccharomyces cerevisiae: Then and now.</title>
        <authorList>
            <person name="Engel S.R."/>
            <person name="Dietrich F.S."/>
            <person name="Fisk D.G."/>
            <person name="Binkley G."/>
            <person name="Balakrishnan R."/>
            <person name="Costanzo M.C."/>
            <person name="Dwight S.S."/>
            <person name="Hitz B.C."/>
            <person name="Karra K."/>
            <person name="Nash R.S."/>
            <person name="Weng S."/>
            <person name="Wong E.D."/>
            <person name="Lloyd P."/>
            <person name="Skrzypek M.S."/>
            <person name="Miyasato S.R."/>
            <person name="Simison M."/>
            <person name="Cherry J.M."/>
        </authorList>
    </citation>
    <scope>GENOME REANNOTATION</scope>
    <source>
        <strain>ATCC 204508 / S288c</strain>
    </source>
</reference>
<reference key="5">
    <citation type="journal article" date="2007" name="Genome Res.">
        <title>Approaching a complete repository of sequence-verified protein-encoding clones for Saccharomyces cerevisiae.</title>
        <authorList>
            <person name="Hu Y."/>
            <person name="Rolfs A."/>
            <person name="Bhullar B."/>
            <person name="Murthy T.V.S."/>
            <person name="Zhu C."/>
            <person name="Berger M.F."/>
            <person name="Camargo A.A."/>
            <person name="Kelley F."/>
            <person name="McCarron S."/>
            <person name="Jepson D."/>
            <person name="Richardson A."/>
            <person name="Raphael J."/>
            <person name="Moreira D."/>
            <person name="Taycher E."/>
            <person name="Zuo D."/>
            <person name="Mohr S."/>
            <person name="Kane M.F."/>
            <person name="Williamson J."/>
            <person name="Simpson A.J.G."/>
            <person name="Bulyk M.L."/>
            <person name="Harlow E."/>
            <person name="Marsischky G."/>
            <person name="Kolodner R.D."/>
            <person name="LaBaer J."/>
        </authorList>
    </citation>
    <scope>NUCLEOTIDE SEQUENCE [GENOMIC DNA]</scope>
    <source>
        <strain>ATCC 204508 / S288c</strain>
    </source>
</reference>
<reference key="6">
    <citation type="journal article" date="2003" name="Nature">
        <title>Global analysis of protein expression in yeast.</title>
        <authorList>
            <person name="Ghaemmaghami S."/>
            <person name="Huh W.-K."/>
            <person name="Bower K."/>
            <person name="Howson R.W."/>
            <person name="Belle A."/>
            <person name="Dephoure N."/>
            <person name="O'Shea E.K."/>
            <person name="Weissman J.S."/>
        </authorList>
    </citation>
    <scope>LEVEL OF PROTEIN EXPRESSION [LARGE SCALE ANALYSIS]</scope>
</reference>
<reference key="7">
    <citation type="journal article" date="2006" name="Proc. Natl. Acad. Sci. U.S.A.">
        <title>A global topology map of the Saccharomyces cerevisiae membrane proteome.</title>
        <authorList>
            <person name="Kim H."/>
            <person name="Melen K."/>
            <person name="Oesterberg M."/>
            <person name="von Heijne G."/>
        </authorList>
    </citation>
    <scope>TOPOLOGY [LARGE SCALE ANALYSIS]</scope>
    <source>
        <strain>ATCC 208353 / W303-1A</strain>
    </source>
</reference>
<reference key="8">
    <citation type="journal article" date="2015" name="J. Cell Biol.">
        <title>A conserved family of proteins facilitates nascent lipid droplet budding from the ER.</title>
        <authorList>
            <person name="Choudhary V."/>
            <person name="Ojha N."/>
            <person name="Golden A."/>
            <person name="Prinz W.A."/>
        </authorList>
    </citation>
    <scope>FUNCTION</scope>
    <scope>SUBCELLULAR LOCATION</scope>
</reference>
<reference key="9">
    <citation type="journal article" date="2017" name="Microb. Cell">
        <title>Fat storage-inducing transmembrane (FIT or FITM) proteins are related to lipid phosphatase/phosphotransferase enzymes.</title>
        <authorList>
            <person name="Hayes M."/>
            <person name="Choudhary V."/>
            <person name="Ojha N."/>
            <person name="Shin J.J."/>
            <person name="Han G.S."/>
            <person name="Carman G.M."/>
            <person name="Loewen C.J."/>
            <person name="Prinz W.A."/>
            <person name="Levine T."/>
        </authorList>
    </citation>
    <scope>FUNCTION</scope>
    <scope>SUBCELLULAR LOCATION</scope>
    <scope>MUTAGENESIS OF GLU-354</scope>
</reference>
<reference key="10">
    <citation type="journal article" date="2018" name="Curr. Biol.">
        <title>Architecture of lipid droplets in endoplasmic reticulum is determined by phospholipid intrinsic curvature.</title>
        <authorList>
            <person name="Choudhary V."/>
            <person name="Golani G."/>
            <person name="Joshi A.S."/>
            <person name="Cottier S."/>
            <person name="Schneiter R."/>
            <person name="Prinz W.A."/>
            <person name="Kozlov M.M."/>
        </authorList>
    </citation>
    <scope>FUNCTION</scope>
    <scope>SUBCELLULAR LOCATION</scope>
</reference>
<reference key="11">
    <citation type="journal article" date="2020" name="J. Cell Biol.">
        <title>FIT2 is an acyl-coenzyme A diphosphatase crucial for endoplasmic reticulum homeostasis.</title>
        <authorList>
            <person name="Becuwe M."/>
            <person name="Bond L.M."/>
            <person name="Pinto A.F.M."/>
            <person name="Boland S."/>
            <person name="Mejhert N."/>
            <person name="Elliott S.D."/>
            <person name="Cicconet M."/>
            <person name="Graham M.M."/>
            <person name="Liu X.N."/>
            <person name="Ilkayeva O."/>
            <person name="Saghatelian A."/>
            <person name="Walther T.C."/>
            <person name="Farese R.V."/>
        </authorList>
    </citation>
    <scope>FUNCTION</scope>
    <scope>MUTAGENESIS OF HIS-235 AND HIS-350</scope>
</reference>
<organism>
    <name type="scientific">Saccharomyces cerevisiae (strain ATCC 204508 / S288c)</name>
    <name type="common">Baker's yeast</name>
    <dbReference type="NCBI Taxonomy" id="559292"/>
    <lineage>
        <taxon>Eukaryota</taxon>
        <taxon>Fungi</taxon>
        <taxon>Dikarya</taxon>
        <taxon>Ascomycota</taxon>
        <taxon>Saccharomycotina</taxon>
        <taxon>Saccharomycetes</taxon>
        <taxon>Saccharomycetales</taxon>
        <taxon>Saccharomycetaceae</taxon>
        <taxon>Saccharomyces</taxon>
    </lineage>
</organism>
<evidence type="ECO:0000250" key="1">
    <source>
        <dbReference type="UniProtKB" id="P59266"/>
    </source>
</evidence>
<evidence type="ECO:0000250" key="2">
    <source>
        <dbReference type="UniProtKB" id="Q8N6M3"/>
    </source>
</evidence>
<evidence type="ECO:0000255" key="3"/>
<evidence type="ECO:0000255" key="4">
    <source>
        <dbReference type="HAMAP-Rule" id="MF_03231"/>
    </source>
</evidence>
<evidence type="ECO:0000269" key="5">
    <source>
    </source>
</evidence>
<evidence type="ECO:0000269" key="6">
    <source>
    </source>
</evidence>
<evidence type="ECO:0000269" key="7">
    <source>
    </source>
</evidence>
<evidence type="ECO:0000269" key="8">
    <source>
    </source>
</evidence>
<evidence type="ECO:0000269" key="9">
    <source>
    </source>
</evidence>
<evidence type="ECO:0000269" key="10">
    <source>
    </source>
</evidence>
<evidence type="ECO:0000303" key="11">
    <source>
    </source>
</evidence>
<evidence type="ECO:0000305" key="12"/>
<evidence type="ECO:0000312" key="13">
    <source>
        <dbReference type="SGD" id="S000003094"/>
    </source>
</evidence>
<comment type="function">
    <text evidence="1 2 4 6 7 8 9 10">Fatty acyl-coenzyme A (CoA) diphosphatase that hydrolyzes fatty acyl-CoA to yield acyl-4'-phosphopantetheine and adenosine 3',5'-bisphosphate. Preferentially hydrolyzes unsaturated long-chain acyl-CoA substrates in the endoplasmic reticulum (ER) lumen (By similarity). This catalytic activity is required for maintaining ER structure and for lipid droplets (LDs) biogenesis, which are lipid storage organelles involved in maintaining lipid and energy homeostasis (By similarity) (PubMed:26504167, PubMed:29526591, PubMed:32915949). May directly bind to diacylglycerol (DAGs) and triacylglycerol, which is also important for LD biogenesis (By similarity). May support directional budding of nacent LDs from the ER into the cytosol by reducing DAG levels at sites of LD formation (By similarity) (PubMed:29526591). May play a role in the regulation of cell morphology and cytoskeletal organization (By similarity). Involved in phospholipid biosynthesis (By similarity) (PubMed:29417057, PubMed:32915949, PubMed:7706223).</text>
</comment>
<comment type="catalytic activity">
    <reaction evidence="4">
        <text>an acyl-CoA + H2O = an acyl-4'-phosphopantetheine + adenosine 3',5'-bisphosphate + 2 H(+)</text>
        <dbReference type="Rhea" id="RHEA:50044"/>
        <dbReference type="ChEBI" id="CHEBI:15377"/>
        <dbReference type="ChEBI" id="CHEBI:15378"/>
        <dbReference type="ChEBI" id="CHEBI:58342"/>
        <dbReference type="ChEBI" id="CHEBI:58343"/>
        <dbReference type="ChEBI" id="CHEBI:132023"/>
    </reaction>
    <physiologicalReaction direction="left-to-right" evidence="4">
        <dbReference type="Rhea" id="RHEA:50045"/>
    </physiologicalReaction>
</comment>
<comment type="catalytic activity">
    <reaction evidence="4">
        <text>(9Z)-octadecenoyl-CoA + H2O = S-(9Z-octadecenoyl)-4'-phosphopantetheine + adenosine 3',5'-bisphosphate + 2 H(+)</text>
        <dbReference type="Rhea" id="RHEA:65564"/>
        <dbReference type="ChEBI" id="CHEBI:15377"/>
        <dbReference type="ChEBI" id="CHEBI:15378"/>
        <dbReference type="ChEBI" id="CHEBI:57387"/>
        <dbReference type="ChEBI" id="CHEBI:58343"/>
        <dbReference type="ChEBI" id="CHEBI:156553"/>
    </reaction>
    <physiologicalReaction direction="left-to-right" evidence="4">
        <dbReference type="Rhea" id="RHEA:65565"/>
    </physiologicalReaction>
</comment>
<comment type="catalytic activity">
    <reaction evidence="4">
        <text>(5Z,8Z,11Z,14Z)-eicosatetraenoyl-CoA + H2O = S-(5Z,8Z,11Z,14Z-eicosatetraenoyl)-4'-phosphopantetheine + adenosine 3',5'-bisphosphate + 2 H(+)</text>
        <dbReference type="Rhea" id="RHEA:65568"/>
        <dbReference type="ChEBI" id="CHEBI:15377"/>
        <dbReference type="ChEBI" id="CHEBI:15378"/>
        <dbReference type="ChEBI" id="CHEBI:57368"/>
        <dbReference type="ChEBI" id="CHEBI:58343"/>
        <dbReference type="ChEBI" id="CHEBI:156554"/>
    </reaction>
    <physiologicalReaction direction="left-to-right" evidence="4">
        <dbReference type="Rhea" id="RHEA:65569"/>
    </physiologicalReaction>
</comment>
<comment type="catalytic activity">
    <reaction evidence="4">
        <text>hexadecanoyl-CoA + H2O = S-hexadecanoyl-4'-phosphopantetheine + adenosine 3',5'-bisphosphate + 2 H(+)</text>
        <dbReference type="Rhea" id="RHEA:50032"/>
        <dbReference type="ChEBI" id="CHEBI:15377"/>
        <dbReference type="ChEBI" id="CHEBI:15378"/>
        <dbReference type="ChEBI" id="CHEBI:57379"/>
        <dbReference type="ChEBI" id="CHEBI:58343"/>
        <dbReference type="ChEBI" id="CHEBI:132018"/>
    </reaction>
    <physiologicalReaction direction="left-to-right" evidence="4">
        <dbReference type="Rhea" id="RHEA:50033"/>
    </physiologicalReaction>
</comment>
<comment type="subcellular location">
    <subcellularLocation>
        <location evidence="4 6 7 8">Endoplasmic reticulum membrane</location>
        <topology evidence="4">Multi-pass membrane protein</topology>
    </subcellularLocation>
    <text evidence="8">Enriched at sites of lipid droplet (LD) biogenesis.</text>
</comment>
<comment type="miscellaneous">
    <text evidence="5">Present with 538 molecules/cell in log phase SD medium.</text>
</comment>
<comment type="similarity">
    <text evidence="4">Belongs to the FIT family. Fungal FIT2B/SCS3 subfamily.</text>
</comment>
<feature type="chain" id="PRO_0000097635" description="Acyl-coenzyme A diphosphatase SCS3">
    <location>
        <begin position="1"/>
        <end position="380"/>
    </location>
</feature>
<feature type="topological domain" description="Cytoplasmic" evidence="12">
    <location>
        <begin position="1"/>
        <end position="7"/>
    </location>
</feature>
<feature type="transmembrane region" description="Helical" evidence="3">
    <location>
        <begin position="8"/>
        <end position="28"/>
    </location>
</feature>
<feature type="topological domain" description="Lumenal" evidence="12">
    <location>
        <begin position="29"/>
        <end position="43"/>
    </location>
</feature>
<feature type="transmembrane region" description="Helical" evidence="3">
    <location>
        <begin position="44"/>
        <end position="64"/>
    </location>
</feature>
<feature type="topological domain" description="Cytoplasmic" evidence="12">
    <location>
        <begin position="65"/>
        <end position="88"/>
    </location>
</feature>
<feature type="transmembrane region" description="Helical" evidence="3">
    <location>
        <begin position="89"/>
        <end position="109"/>
    </location>
</feature>
<feature type="topological domain" description="Lumenal" evidence="12">
    <location>
        <begin position="110"/>
        <end position="233"/>
    </location>
</feature>
<feature type="transmembrane region" description="Helical" evidence="3">
    <location>
        <begin position="234"/>
        <end position="254"/>
    </location>
</feature>
<feature type="topological domain" description="Cytoplasmic" evidence="12">
    <location>
        <begin position="255"/>
        <end position="325"/>
    </location>
</feature>
<feature type="transmembrane region" description="Helical" evidence="3">
    <location>
        <begin position="326"/>
        <end position="346"/>
    </location>
</feature>
<feature type="topological domain" description="Lumenal" evidence="12">
    <location>
        <begin position="347"/>
        <end position="356"/>
    </location>
</feature>
<feature type="transmembrane region" description="Helical" evidence="3">
    <location>
        <begin position="357"/>
        <end position="377"/>
    </location>
</feature>
<feature type="topological domain" description="Cytoplasmic" evidence="12">
    <location>
        <begin position="378"/>
        <end position="380"/>
    </location>
</feature>
<feature type="active site" evidence="4">
    <location>
        <position position="235"/>
    </location>
</feature>
<feature type="active site" evidence="4">
    <location>
        <position position="350"/>
    </location>
</feature>
<feature type="mutagenesis site" description="Inositol auxotrophy. Impaired ER morphology with the apparition of clumps of ER membrane." evidence="9">
    <original>H</original>
    <variation>A</variation>
    <location>
        <position position="235"/>
    </location>
</feature>
<feature type="mutagenesis site" description="Inositol auxotrophy. Impaired ER morphology with the apparition of clumps of ER membrane." evidence="9">
    <original>H</original>
    <variation>A</variation>
    <location>
        <position position="350"/>
    </location>
</feature>
<feature type="mutagenesis site" description="Temperature sensitive. Inositol auxotroph at 37 degrees Celsius, but partially supports growth on inositol at 25 degrees Celsius. Impaired ER morphology and aberrant lipid droplet (LD) budding." evidence="7">
    <original>E</original>
    <variation>A</variation>
    <location>
        <position position="354"/>
    </location>
</feature>
<feature type="mutagenesis site" description="Inositol auxotrophy. Impaired ER morphology and aberrant lipid droplet (LD) budding." evidence="7">
    <original>E</original>
    <variation>K</variation>
    <variation>V</variation>
    <location>
        <position position="354"/>
    </location>
</feature>
<feature type="mutagenesis site" description="No defect in inositol biosynthesis. Aberrant lipid droplet (LD) budding." evidence="7">
    <original>E</original>
    <variation>Q</variation>
    <variation>D</variation>
    <location>
        <position position="354"/>
    </location>
</feature>
<feature type="sequence conflict" description="In Ref. 5; AAS56825." evidence="12" ref="5">
    <original>T</original>
    <variation>A</variation>
    <location>
        <position position="240"/>
    </location>
</feature>
<keyword id="KW-0256">Endoplasmic reticulum</keyword>
<keyword id="KW-0378">Hydrolase</keyword>
<keyword id="KW-0444">Lipid biosynthesis</keyword>
<keyword id="KW-0443">Lipid metabolism</keyword>
<keyword id="KW-0472">Membrane</keyword>
<keyword id="KW-0594">Phospholipid biosynthesis</keyword>
<keyword id="KW-1208">Phospholipid metabolism</keyword>
<keyword id="KW-1185">Reference proteome</keyword>
<keyword id="KW-0812">Transmembrane</keyword>
<keyword id="KW-1133">Transmembrane helix</keyword>
<gene>
    <name evidence="4 11" type="primary">SCS3</name>
    <name type="synonym">FIT2B</name>
    <name evidence="13" type="ordered locus">YGL126W</name>
    <name type="ORF">G2868</name>
</gene>
<protein>
    <recommendedName>
        <fullName evidence="4">Acyl-coenzyme A diphosphatase SCS3</fullName>
        <ecNumber evidence="4">3.6.1.-</ecNumber>
    </recommendedName>
    <alternativeName>
        <fullName evidence="4 11">FIT family protein SCS3</fullName>
    </alternativeName>
</protein>
<dbReference type="EC" id="3.6.1.-" evidence="4"/>
<dbReference type="EMBL" id="D21200">
    <property type="protein sequence ID" value="BAA04742.1"/>
    <property type="molecule type" value="Genomic_DNA"/>
</dbReference>
<dbReference type="EMBL" id="Z72648">
    <property type="protein sequence ID" value="CAA96835.1"/>
    <property type="molecule type" value="Genomic_DNA"/>
</dbReference>
<dbReference type="EMBL" id="Z72647">
    <property type="protein sequence ID" value="CAA96834.1"/>
    <property type="molecule type" value="Genomic_DNA"/>
</dbReference>
<dbReference type="EMBL" id="AY558499">
    <property type="protein sequence ID" value="AAS56825.1"/>
    <property type="molecule type" value="Genomic_DNA"/>
</dbReference>
<dbReference type="EMBL" id="BK006941">
    <property type="protein sequence ID" value="DAA07983.1"/>
    <property type="molecule type" value="Genomic_DNA"/>
</dbReference>
<dbReference type="PIR" id="S53293">
    <property type="entry name" value="S53293"/>
</dbReference>
<dbReference type="RefSeq" id="NP_011389.3">
    <property type="nucleotide sequence ID" value="NM_001180991.3"/>
</dbReference>
<dbReference type="SMR" id="P53012"/>
<dbReference type="BioGRID" id="33125">
    <property type="interactions" value="209"/>
</dbReference>
<dbReference type="DIP" id="DIP-1209N"/>
<dbReference type="FunCoup" id="P53012">
    <property type="interactions" value="124"/>
</dbReference>
<dbReference type="IntAct" id="P53012">
    <property type="interactions" value="7"/>
</dbReference>
<dbReference type="MINT" id="P53012"/>
<dbReference type="STRING" id="4932.YGL126W"/>
<dbReference type="PaxDb" id="4932-YGL126W"/>
<dbReference type="PeptideAtlas" id="P53012"/>
<dbReference type="EnsemblFungi" id="YGL126W_mRNA">
    <property type="protein sequence ID" value="YGL126W"/>
    <property type="gene ID" value="YGL126W"/>
</dbReference>
<dbReference type="GeneID" id="852751"/>
<dbReference type="KEGG" id="sce:YGL126W"/>
<dbReference type="AGR" id="SGD:S000003094"/>
<dbReference type="SGD" id="S000003094">
    <property type="gene designation" value="SCS3"/>
</dbReference>
<dbReference type="VEuPathDB" id="FungiDB:YGL126W"/>
<dbReference type="eggNOG" id="KOG3750">
    <property type="taxonomic scope" value="Eukaryota"/>
</dbReference>
<dbReference type="GeneTree" id="ENSGT00530000063693"/>
<dbReference type="HOGENOM" id="CLU_048143_2_1_1"/>
<dbReference type="InParanoid" id="P53012"/>
<dbReference type="OMA" id="FIIWDNP"/>
<dbReference type="OrthoDB" id="5579088at2759"/>
<dbReference type="BioCyc" id="YEAST:G3O-30622-MONOMER"/>
<dbReference type="Reactome" id="R-SCE-8964572">
    <property type="pathway name" value="Lipid particle organization"/>
</dbReference>
<dbReference type="BioGRID-ORCS" id="852751">
    <property type="hits" value="7 hits in 10 CRISPR screens"/>
</dbReference>
<dbReference type="PRO" id="PR:P53012"/>
<dbReference type="Proteomes" id="UP000002311">
    <property type="component" value="Chromosome VII"/>
</dbReference>
<dbReference type="RNAct" id="P53012">
    <property type="molecule type" value="protein"/>
</dbReference>
<dbReference type="GO" id="GO:0005783">
    <property type="term" value="C:endoplasmic reticulum"/>
    <property type="evidence" value="ECO:0000314"/>
    <property type="project" value="SGD"/>
</dbReference>
<dbReference type="GO" id="GO:0005788">
    <property type="term" value="C:endoplasmic reticulum lumen"/>
    <property type="evidence" value="ECO:0000315"/>
    <property type="project" value="UniProtKB"/>
</dbReference>
<dbReference type="GO" id="GO:0005789">
    <property type="term" value="C:endoplasmic reticulum membrane"/>
    <property type="evidence" value="ECO:0000314"/>
    <property type="project" value="UniProtKB"/>
</dbReference>
<dbReference type="GO" id="GO:0010945">
    <property type="term" value="F:coenzyme A diphosphatase activity"/>
    <property type="evidence" value="ECO:0000266"/>
    <property type="project" value="SGD"/>
</dbReference>
<dbReference type="GO" id="GO:0016818">
    <property type="term" value="F:hydrolase activity, acting on acid anhydrides, in phosphorus-containing anhydrides"/>
    <property type="evidence" value="ECO:0000314"/>
    <property type="project" value="UniProtKB"/>
</dbReference>
<dbReference type="GO" id="GO:0036115">
    <property type="term" value="P:fatty-acyl-CoA catabolic process"/>
    <property type="evidence" value="ECO:0000266"/>
    <property type="project" value="SGD"/>
</dbReference>
<dbReference type="GO" id="GO:0140042">
    <property type="term" value="P:lipid droplet formation"/>
    <property type="evidence" value="ECO:0000315"/>
    <property type="project" value="UniProtKB"/>
</dbReference>
<dbReference type="GO" id="GO:0034389">
    <property type="term" value="P:lipid droplet organization"/>
    <property type="evidence" value="ECO:0000318"/>
    <property type="project" value="GO_Central"/>
</dbReference>
<dbReference type="GO" id="GO:0019915">
    <property type="term" value="P:lipid storage"/>
    <property type="evidence" value="ECO:0000318"/>
    <property type="project" value="GO_Central"/>
</dbReference>
<dbReference type="GO" id="GO:0008654">
    <property type="term" value="P:phospholipid biosynthetic process"/>
    <property type="evidence" value="ECO:0000315"/>
    <property type="project" value="SGD"/>
</dbReference>
<dbReference type="GO" id="GO:0055091">
    <property type="term" value="P:phospholipid homeostasis"/>
    <property type="evidence" value="ECO:0000315"/>
    <property type="project" value="SGD"/>
</dbReference>
<dbReference type="GO" id="GO:0006644">
    <property type="term" value="P:phospholipid metabolic process"/>
    <property type="evidence" value="ECO:0000315"/>
    <property type="project" value="SGD"/>
</dbReference>
<dbReference type="HAMAP" id="MF_03231">
    <property type="entry name" value="SCS3"/>
    <property type="match status" value="1"/>
</dbReference>
<dbReference type="InterPro" id="IPR019388">
    <property type="entry name" value="FIT"/>
</dbReference>
<dbReference type="InterPro" id="IPR046400">
    <property type="entry name" value="SCS3"/>
</dbReference>
<dbReference type="PANTHER" id="PTHR23129">
    <property type="entry name" value="ACYL-COENZYME A DIPHOSPHATASE FITM2"/>
    <property type="match status" value="1"/>
</dbReference>
<dbReference type="PANTHER" id="PTHR23129:SF0">
    <property type="entry name" value="ACYL-COENZYME A DIPHOSPHATASE FITM2"/>
    <property type="match status" value="1"/>
</dbReference>
<dbReference type="Pfam" id="PF10261">
    <property type="entry name" value="FIT"/>
    <property type="match status" value="1"/>
</dbReference>
<accession>P53012</accession>
<accession>D6VU22</accession>
<accession>E9P8W2</accession>
<sequence length="380" mass="42735">MSSKWFNAIHLLVCPLTVLVGYLMNAYGYGAALQATLNKDGLVNAMLVKKGWFWTSLVGWWCIIRYRAVPGATGRDRRHIVQSFKRYAILTVWWYVFTQGIWFGVGPIMDLVFVYTGGHCHYDVFDDAGHVNEDFQGSVTRTNRALALIHNVLTLHGHHQEHRQQQLWDRSIGSIQGALQATQPKTPKNVTASAAAAINTFIHDQMHRWQGPLTTSAQCRRFGGHWAGGHDPSGHVFLATLMCMFLLGELRVFGRRALAHLYAQKWQLVRLVTRLFDTGPLWTWRRCGGGSMTCGARLWRAIVEPPVTCAAALLRLTRCIACDHPVIILLTLLVTWLWQLLLTAVASRFHTVREHMSGLLAAYIVTGLVYARDAAALRPV</sequence>
<name>SCS3_YEAST</name>
<proteinExistence type="evidence at protein level"/>